<keyword id="KW-0067">ATP-binding</keyword>
<keyword id="KW-0997">Cell inner membrane</keyword>
<keyword id="KW-1003">Cell membrane</keyword>
<keyword id="KW-0472">Membrane</keyword>
<keyword id="KW-0547">Nucleotide-binding</keyword>
<keyword id="KW-1185">Reference proteome</keyword>
<keyword id="KW-1278">Translocase</keyword>
<keyword id="KW-0813">Transport</keyword>
<protein>
    <recommendedName>
        <fullName evidence="1">Spermidine/putrescine import ATP-binding protein PotA</fullName>
        <ecNumber evidence="1">7.6.2.11</ecNumber>
    </recommendedName>
</protein>
<dbReference type="EC" id="7.6.2.11" evidence="1"/>
<dbReference type="EMBL" id="AE017282">
    <property type="protein sequence ID" value="AAU93011.1"/>
    <property type="molecule type" value="Genomic_DNA"/>
</dbReference>
<dbReference type="SMR" id="Q60AI1"/>
<dbReference type="STRING" id="243233.MCA0872"/>
<dbReference type="KEGG" id="mca:MCA0872"/>
<dbReference type="eggNOG" id="COG3842">
    <property type="taxonomic scope" value="Bacteria"/>
</dbReference>
<dbReference type="HOGENOM" id="CLU_000604_1_1_6"/>
<dbReference type="Proteomes" id="UP000006821">
    <property type="component" value="Chromosome"/>
</dbReference>
<dbReference type="GO" id="GO:0043190">
    <property type="term" value="C:ATP-binding cassette (ABC) transporter complex"/>
    <property type="evidence" value="ECO:0007669"/>
    <property type="project" value="InterPro"/>
</dbReference>
<dbReference type="GO" id="GO:0015417">
    <property type="term" value="F:ABC-type polyamine transporter activity"/>
    <property type="evidence" value="ECO:0007669"/>
    <property type="project" value="UniProtKB-EC"/>
</dbReference>
<dbReference type="GO" id="GO:0005524">
    <property type="term" value="F:ATP binding"/>
    <property type="evidence" value="ECO:0007669"/>
    <property type="project" value="UniProtKB-KW"/>
</dbReference>
<dbReference type="GO" id="GO:0016887">
    <property type="term" value="F:ATP hydrolysis activity"/>
    <property type="evidence" value="ECO:0007669"/>
    <property type="project" value="InterPro"/>
</dbReference>
<dbReference type="FunFam" id="3.40.50.300:FF:000133">
    <property type="entry name" value="Spermidine/putrescine import ATP-binding protein PotA"/>
    <property type="match status" value="1"/>
</dbReference>
<dbReference type="Gene3D" id="2.40.50.100">
    <property type="match status" value="1"/>
</dbReference>
<dbReference type="Gene3D" id="3.40.50.300">
    <property type="entry name" value="P-loop containing nucleotide triphosphate hydrolases"/>
    <property type="match status" value="1"/>
</dbReference>
<dbReference type="InterPro" id="IPR003593">
    <property type="entry name" value="AAA+_ATPase"/>
</dbReference>
<dbReference type="InterPro" id="IPR050093">
    <property type="entry name" value="ABC_SmlMolc_Importer"/>
</dbReference>
<dbReference type="InterPro" id="IPR003439">
    <property type="entry name" value="ABC_transporter-like_ATP-bd"/>
</dbReference>
<dbReference type="InterPro" id="IPR017871">
    <property type="entry name" value="ABC_transporter-like_CS"/>
</dbReference>
<dbReference type="InterPro" id="IPR008995">
    <property type="entry name" value="Mo/tungstate-bd_C_term_dom"/>
</dbReference>
<dbReference type="InterPro" id="IPR027417">
    <property type="entry name" value="P-loop_NTPase"/>
</dbReference>
<dbReference type="InterPro" id="IPR005893">
    <property type="entry name" value="PotA-like"/>
</dbReference>
<dbReference type="InterPro" id="IPR013611">
    <property type="entry name" value="Transp-assoc_OB_typ2"/>
</dbReference>
<dbReference type="NCBIfam" id="TIGR01187">
    <property type="entry name" value="potA"/>
    <property type="match status" value="1"/>
</dbReference>
<dbReference type="NCBIfam" id="NF006987">
    <property type="entry name" value="PRK09452.1"/>
    <property type="match status" value="1"/>
</dbReference>
<dbReference type="PANTHER" id="PTHR42781">
    <property type="entry name" value="SPERMIDINE/PUTRESCINE IMPORT ATP-BINDING PROTEIN POTA"/>
    <property type="match status" value="1"/>
</dbReference>
<dbReference type="PANTHER" id="PTHR42781:SF4">
    <property type="entry name" value="SPERMIDINE_PUTRESCINE IMPORT ATP-BINDING PROTEIN POTA"/>
    <property type="match status" value="1"/>
</dbReference>
<dbReference type="Pfam" id="PF00005">
    <property type="entry name" value="ABC_tran"/>
    <property type="match status" value="1"/>
</dbReference>
<dbReference type="Pfam" id="PF08402">
    <property type="entry name" value="TOBE_2"/>
    <property type="match status" value="1"/>
</dbReference>
<dbReference type="SMART" id="SM00382">
    <property type="entry name" value="AAA"/>
    <property type="match status" value="1"/>
</dbReference>
<dbReference type="SUPFAM" id="SSF50331">
    <property type="entry name" value="MOP-like"/>
    <property type="match status" value="1"/>
</dbReference>
<dbReference type="SUPFAM" id="SSF52540">
    <property type="entry name" value="P-loop containing nucleoside triphosphate hydrolases"/>
    <property type="match status" value="1"/>
</dbReference>
<dbReference type="PROSITE" id="PS00211">
    <property type="entry name" value="ABC_TRANSPORTER_1"/>
    <property type="match status" value="1"/>
</dbReference>
<dbReference type="PROSITE" id="PS50893">
    <property type="entry name" value="ABC_TRANSPORTER_2"/>
    <property type="match status" value="1"/>
</dbReference>
<dbReference type="PROSITE" id="PS51305">
    <property type="entry name" value="POTA"/>
    <property type="match status" value="1"/>
</dbReference>
<sequence>MRPSRRPRFRNILENRTIAAMTRSTIASFRAVSKHYGSHCALRDFNLELREGELLTLLGPSGCGKTTVLRLLAGLEIPDSGEIFLDGRTLAGVPPEARNVNTVFQSYALFPHLSVAENVAFGLRMKKLGSAEIRARTAEALRMVRLDGLGGHRPLQLSGGQQQRVALARALVNRPRVLLLDECLSALDYQLRREMQLELKGLQRQTGITFVFVTHDREEALSMSDRIAVMRTGRIEQLGPPRDIYERPANLFVAQFAGESNVLEATVTAITAPDSLIVELAGTPLTVRTDRRFRVGARLVLVLRPEDLHVHDDAAAEGGLAGHVLERTYRGVTLDTVIALDAGPRIKTSEFFREDTPALDHPPGQRVRVSWTPGWEIVLPHDPET</sequence>
<evidence type="ECO:0000255" key="1">
    <source>
        <dbReference type="HAMAP-Rule" id="MF_01726"/>
    </source>
</evidence>
<proteinExistence type="inferred from homology"/>
<reference key="1">
    <citation type="journal article" date="2004" name="PLoS Biol.">
        <title>Genomic insights into methanotrophy: the complete genome sequence of Methylococcus capsulatus (Bath).</title>
        <authorList>
            <person name="Ward N.L."/>
            <person name="Larsen O."/>
            <person name="Sakwa J."/>
            <person name="Bruseth L."/>
            <person name="Khouri H.M."/>
            <person name="Durkin A.S."/>
            <person name="Dimitrov G."/>
            <person name="Jiang L."/>
            <person name="Scanlan D."/>
            <person name="Kang K.H."/>
            <person name="Lewis M.R."/>
            <person name="Nelson K.E."/>
            <person name="Methe B.A."/>
            <person name="Wu M."/>
            <person name="Heidelberg J.F."/>
            <person name="Paulsen I.T."/>
            <person name="Fouts D.E."/>
            <person name="Ravel J."/>
            <person name="Tettelin H."/>
            <person name="Ren Q."/>
            <person name="Read T.D."/>
            <person name="DeBoy R.T."/>
            <person name="Seshadri R."/>
            <person name="Salzberg S.L."/>
            <person name="Jensen H.B."/>
            <person name="Birkeland N.K."/>
            <person name="Nelson W.C."/>
            <person name="Dodson R.J."/>
            <person name="Grindhaug S.H."/>
            <person name="Holt I.E."/>
            <person name="Eidhammer I."/>
            <person name="Jonasen I."/>
            <person name="Vanaken S."/>
            <person name="Utterback T.R."/>
            <person name="Feldblyum T.V."/>
            <person name="Fraser C.M."/>
            <person name="Lillehaug J.R."/>
            <person name="Eisen J.A."/>
        </authorList>
    </citation>
    <scope>NUCLEOTIDE SEQUENCE [LARGE SCALE GENOMIC DNA]</scope>
    <source>
        <strain>ATCC 33009 / NCIMB 11132 / Bath</strain>
    </source>
</reference>
<gene>
    <name evidence="1" type="primary">potA</name>
    <name type="ordered locus">MCA0872</name>
</gene>
<feature type="chain" id="PRO_0000286250" description="Spermidine/putrescine import ATP-binding protein PotA">
    <location>
        <begin position="1"/>
        <end position="385"/>
    </location>
</feature>
<feature type="domain" description="ABC transporter" evidence="1">
    <location>
        <begin position="27"/>
        <end position="257"/>
    </location>
</feature>
<feature type="binding site" evidence="1">
    <location>
        <begin position="59"/>
        <end position="66"/>
    </location>
    <ligand>
        <name>ATP</name>
        <dbReference type="ChEBI" id="CHEBI:30616"/>
    </ligand>
</feature>
<accession>Q60AI1</accession>
<name>POTA_METCA</name>
<comment type="function">
    <text evidence="1">Part of the ABC transporter complex PotABCD involved in spermidine/putrescine import. Responsible for energy coupling to the transport system.</text>
</comment>
<comment type="catalytic activity">
    <reaction evidence="1">
        <text>ATP + H2O + polyamine-[polyamine-binding protein]Side 1 = ADP + phosphate + polyamineSide 2 + [polyamine-binding protein]Side 1.</text>
        <dbReference type="EC" id="7.6.2.11"/>
    </reaction>
</comment>
<comment type="subunit">
    <text evidence="1">The complex is composed of two ATP-binding proteins (PotA), two transmembrane proteins (PotB and PotC) and a solute-binding protein (PotD).</text>
</comment>
<comment type="subcellular location">
    <subcellularLocation>
        <location evidence="1">Cell inner membrane</location>
        <topology evidence="1">Peripheral membrane protein</topology>
    </subcellularLocation>
</comment>
<comment type="similarity">
    <text evidence="1">Belongs to the ABC transporter superfamily. Spermidine/putrescine importer (TC 3.A.1.11.1) family.</text>
</comment>
<organism>
    <name type="scientific">Methylococcus capsulatus (strain ATCC 33009 / NCIMB 11132 / Bath)</name>
    <dbReference type="NCBI Taxonomy" id="243233"/>
    <lineage>
        <taxon>Bacteria</taxon>
        <taxon>Pseudomonadati</taxon>
        <taxon>Pseudomonadota</taxon>
        <taxon>Gammaproteobacteria</taxon>
        <taxon>Methylococcales</taxon>
        <taxon>Methylococcaceae</taxon>
        <taxon>Methylococcus</taxon>
    </lineage>
</organism>